<dbReference type="EC" id="2.7.2.4"/>
<dbReference type="EMBL" id="U62020">
    <property type="protein sequence ID" value="AAB63104.1"/>
    <property type="molecule type" value="mRNA"/>
</dbReference>
<dbReference type="EMBL" id="Y16255">
    <property type="protein sequence ID" value="CAC06395.1"/>
    <property type="molecule type" value="Genomic_DNA"/>
</dbReference>
<dbReference type="EMBL" id="AB007650">
    <property type="protein sequence ID" value="BAB08285.1"/>
    <property type="molecule type" value="Genomic_DNA"/>
</dbReference>
<dbReference type="EMBL" id="CP002688">
    <property type="protein sequence ID" value="AED91982.1"/>
    <property type="molecule type" value="Genomic_DNA"/>
</dbReference>
<dbReference type="EMBL" id="CP002688">
    <property type="protein sequence ID" value="AED91983.1"/>
    <property type="molecule type" value="Genomic_DNA"/>
</dbReference>
<dbReference type="RefSeq" id="NP_001078581.1">
    <property type="nucleotide sequence ID" value="NM_001085112.2"/>
</dbReference>
<dbReference type="RefSeq" id="NP_196910.1">
    <property type="nucleotide sequence ID" value="NM_121409.4"/>
</dbReference>
<dbReference type="SMR" id="O23653"/>
<dbReference type="FunCoup" id="O23653">
    <property type="interactions" value="825"/>
</dbReference>
<dbReference type="STRING" id="3702.O23653"/>
<dbReference type="iPTMnet" id="O23653"/>
<dbReference type="MetOSite" id="O23653"/>
<dbReference type="PaxDb" id="3702-AT5G14060.2"/>
<dbReference type="ProteomicsDB" id="244807"/>
<dbReference type="EnsemblPlants" id="AT5G14060.1">
    <property type="protein sequence ID" value="AT5G14060.1"/>
    <property type="gene ID" value="AT5G14060"/>
</dbReference>
<dbReference type="EnsemblPlants" id="AT5G14060.2">
    <property type="protein sequence ID" value="AT5G14060.2"/>
    <property type="gene ID" value="AT5G14060"/>
</dbReference>
<dbReference type="GeneID" id="831255"/>
<dbReference type="Gramene" id="AT5G14060.1">
    <property type="protein sequence ID" value="AT5G14060.1"/>
    <property type="gene ID" value="AT5G14060"/>
</dbReference>
<dbReference type="Gramene" id="AT5G14060.2">
    <property type="protein sequence ID" value="AT5G14060.2"/>
    <property type="gene ID" value="AT5G14060"/>
</dbReference>
<dbReference type="KEGG" id="ath:AT5G14060"/>
<dbReference type="Araport" id="AT5G14060"/>
<dbReference type="TAIR" id="AT5G14060">
    <property type="gene designation" value="CARAB-AK-LYS"/>
</dbReference>
<dbReference type="eggNOG" id="KOG0456">
    <property type="taxonomic scope" value="Eukaryota"/>
</dbReference>
<dbReference type="HOGENOM" id="CLU_009116_6_1_1"/>
<dbReference type="InParanoid" id="O23653"/>
<dbReference type="OMA" id="IMIGTRR"/>
<dbReference type="PhylomeDB" id="O23653"/>
<dbReference type="BioCyc" id="ARA:AT5G14060-MONOMER"/>
<dbReference type="BRENDA" id="2.7.2.4">
    <property type="organism ID" value="399"/>
</dbReference>
<dbReference type="SABIO-RK" id="O23653"/>
<dbReference type="UniPathway" id="UPA00034">
    <property type="reaction ID" value="UER00015"/>
</dbReference>
<dbReference type="UniPathway" id="UPA00050">
    <property type="reaction ID" value="UER00461"/>
</dbReference>
<dbReference type="UniPathway" id="UPA00051">
    <property type="reaction ID" value="UER00462"/>
</dbReference>
<dbReference type="PRO" id="PR:O23653"/>
<dbReference type="Proteomes" id="UP000006548">
    <property type="component" value="Chromosome 5"/>
</dbReference>
<dbReference type="ExpressionAtlas" id="O23653">
    <property type="expression patterns" value="baseline and differential"/>
</dbReference>
<dbReference type="GO" id="GO:0009570">
    <property type="term" value="C:chloroplast stroma"/>
    <property type="evidence" value="ECO:0007005"/>
    <property type="project" value="TAIR"/>
</dbReference>
<dbReference type="GO" id="GO:0004072">
    <property type="term" value="F:aspartate kinase activity"/>
    <property type="evidence" value="ECO:0007669"/>
    <property type="project" value="UniProtKB-EC"/>
</dbReference>
<dbReference type="GO" id="GO:0005524">
    <property type="term" value="F:ATP binding"/>
    <property type="evidence" value="ECO:0007669"/>
    <property type="project" value="UniProtKB-KW"/>
</dbReference>
<dbReference type="GO" id="GO:0009089">
    <property type="term" value="P:lysine biosynthetic process via diaminopimelate"/>
    <property type="evidence" value="ECO:0007669"/>
    <property type="project" value="UniProtKB-UniPathway"/>
</dbReference>
<dbReference type="GO" id="GO:0009088">
    <property type="term" value="P:threonine biosynthetic process"/>
    <property type="evidence" value="ECO:0007669"/>
    <property type="project" value="UniProtKB-UniPathway"/>
</dbReference>
<dbReference type="FunFam" id="1.20.120.1320:FF:000001">
    <property type="entry name" value="Aspartokinase"/>
    <property type="match status" value="1"/>
</dbReference>
<dbReference type="FunFam" id="3.30.70.260:FF:000016">
    <property type="entry name" value="Aspartokinase"/>
    <property type="match status" value="1"/>
</dbReference>
<dbReference type="FunFam" id="3.40.1160.10:FF:000012">
    <property type="entry name" value="Aspartokinase"/>
    <property type="match status" value="1"/>
</dbReference>
<dbReference type="FunFam" id="3.30.70.260:FF:000020">
    <property type="entry name" value="Aspartokinase 1"/>
    <property type="match status" value="1"/>
</dbReference>
<dbReference type="Gene3D" id="3.30.70.260">
    <property type="match status" value="2"/>
</dbReference>
<dbReference type="Gene3D" id="3.40.1160.10">
    <property type="entry name" value="Acetylglutamate kinase-like"/>
    <property type="match status" value="1"/>
</dbReference>
<dbReference type="Gene3D" id="1.20.120.1320">
    <property type="entry name" value="Aspartokinase, catalytic domain"/>
    <property type="match status" value="1"/>
</dbReference>
<dbReference type="InterPro" id="IPR036393">
    <property type="entry name" value="AceGlu_kinase-like_sf"/>
</dbReference>
<dbReference type="InterPro" id="IPR045865">
    <property type="entry name" value="ACT-like_dom_sf"/>
</dbReference>
<dbReference type="InterPro" id="IPR054352">
    <property type="entry name" value="ACT_Aspartokinase"/>
</dbReference>
<dbReference type="InterPro" id="IPR002912">
    <property type="entry name" value="ACT_dom"/>
</dbReference>
<dbReference type="InterPro" id="IPR001048">
    <property type="entry name" value="Asp/Glu/Uridylate_kinase"/>
</dbReference>
<dbReference type="InterPro" id="IPR001341">
    <property type="entry name" value="Asp_kinase"/>
</dbReference>
<dbReference type="InterPro" id="IPR042199">
    <property type="entry name" value="AsparK_Bifunc_asparK/hSer_DH"/>
</dbReference>
<dbReference type="InterPro" id="IPR018042">
    <property type="entry name" value="Aspartate_kinase_CS"/>
</dbReference>
<dbReference type="NCBIfam" id="TIGR00657">
    <property type="entry name" value="asp_kinases"/>
    <property type="match status" value="1"/>
</dbReference>
<dbReference type="PANTHER" id="PTHR21499">
    <property type="entry name" value="ASPARTATE KINASE"/>
    <property type="match status" value="1"/>
</dbReference>
<dbReference type="PANTHER" id="PTHR21499:SF54">
    <property type="entry name" value="ASPARTOKINASE 2, CHLOROPLASTIC"/>
    <property type="match status" value="1"/>
</dbReference>
<dbReference type="Pfam" id="PF00696">
    <property type="entry name" value="AA_kinase"/>
    <property type="match status" value="1"/>
</dbReference>
<dbReference type="Pfam" id="PF22468">
    <property type="entry name" value="ACT_9"/>
    <property type="match status" value="1"/>
</dbReference>
<dbReference type="SUPFAM" id="SSF55021">
    <property type="entry name" value="ACT-like"/>
    <property type="match status" value="2"/>
</dbReference>
<dbReference type="SUPFAM" id="SSF53633">
    <property type="entry name" value="Carbamate kinase-like"/>
    <property type="match status" value="1"/>
</dbReference>
<dbReference type="PROSITE" id="PS51671">
    <property type="entry name" value="ACT"/>
    <property type="match status" value="2"/>
</dbReference>
<dbReference type="PROSITE" id="PS00324">
    <property type="entry name" value="ASPARTOKINASE"/>
    <property type="match status" value="1"/>
</dbReference>
<keyword id="KW-0028">Amino-acid biosynthesis</keyword>
<keyword id="KW-0067">ATP-binding</keyword>
<keyword id="KW-0150">Chloroplast</keyword>
<keyword id="KW-0418">Kinase</keyword>
<keyword id="KW-0547">Nucleotide-binding</keyword>
<keyword id="KW-0934">Plastid</keyword>
<keyword id="KW-1185">Reference proteome</keyword>
<keyword id="KW-0677">Repeat</keyword>
<keyword id="KW-0791">Threonine biosynthesis</keyword>
<keyword id="KW-0808">Transferase</keyword>
<keyword id="KW-0809">Transit peptide</keyword>
<protein>
    <recommendedName>
        <fullName>Aspartokinase 2, chloroplastic</fullName>
        <ecNumber>2.7.2.4</ecNumber>
    </recommendedName>
    <alternativeName>
        <fullName>Aspartate kinase 2</fullName>
    </alternativeName>
</protein>
<comment type="function">
    <text>Involved in the first step of essential amino acids lysine, threonine, methionine and isoleucine synthesis via the aspartate-family pathway.</text>
</comment>
<comment type="catalytic activity">
    <reaction>
        <text>L-aspartate + ATP = 4-phospho-L-aspartate + ADP</text>
        <dbReference type="Rhea" id="RHEA:23776"/>
        <dbReference type="ChEBI" id="CHEBI:29991"/>
        <dbReference type="ChEBI" id="CHEBI:30616"/>
        <dbReference type="ChEBI" id="CHEBI:57535"/>
        <dbReference type="ChEBI" id="CHEBI:456216"/>
        <dbReference type="EC" id="2.7.2.4"/>
    </reaction>
</comment>
<comment type="activity regulation">
    <text evidence="4">Allosterically inhibited by lysine, but not by S-adenosyl-L-methionine (SAM). K(0.5) for lysine in the presence of physiological concentrations of substrates is 12.5 uM. No inhibition by threonine or leucine and no activation or inhibition by alanine, cysteine, isoleucine, serine, valine, methionine, glutamine, asparagine, glutamic acid or arginine.</text>
</comment>
<comment type="biophysicochemical properties">
    <kinetics>
        <KM evidence="4">980 uM for ATP</KM>
        <KM evidence="4">1940 uM for aspartate</KM>
        <text>K(cat) is 14.5/sec.</text>
    </kinetics>
</comment>
<comment type="pathway">
    <text>Amino-acid biosynthesis; L-lysine biosynthesis via DAP pathway; (S)-tetrahydrodipicolinate from L-aspartate: step 1/4.</text>
</comment>
<comment type="pathway">
    <text>Amino-acid biosynthesis; L-methionine biosynthesis via de novo pathway; L-homoserine from L-aspartate: step 1/3.</text>
</comment>
<comment type="pathway">
    <text>Amino-acid biosynthesis; L-threonine biosynthesis; L-threonine from L-aspartate: step 1/5.</text>
</comment>
<comment type="subcellular location">
    <subcellularLocation>
        <location evidence="6">Plastid</location>
        <location evidence="6">Chloroplast</location>
    </subcellularLocation>
</comment>
<comment type="tissue specificity">
    <text evidence="5">Expressed in stems, leaves, floral organs and young seedlings.</text>
</comment>
<comment type="similarity">
    <text evidence="6">Belongs to the aspartokinase family.</text>
</comment>
<name>AK2_ARATH</name>
<proteinExistence type="evidence at protein level"/>
<organism>
    <name type="scientific">Arabidopsis thaliana</name>
    <name type="common">Mouse-ear cress</name>
    <dbReference type="NCBI Taxonomy" id="3702"/>
    <lineage>
        <taxon>Eukaryota</taxon>
        <taxon>Viridiplantae</taxon>
        <taxon>Streptophyta</taxon>
        <taxon>Embryophyta</taxon>
        <taxon>Tracheophyta</taxon>
        <taxon>Spermatophyta</taxon>
        <taxon>Magnoliopsida</taxon>
        <taxon>eudicotyledons</taxon>
        <taxon>Gunneridae</taxon>
        <taxon>Pentapetalae</taxon>
        <taxon>rosids</taxon>
        <taxon>malvids</taxon>
        <taxon>Brassicales</taxon>
        <taxon>Brassicaceae</taxon>
        <taxon>Camelineae</taxon>
        <taxon>Arabidopsis</taxon>
    </lineage>
</organism>
<reference key="1">
    <citation type="journal article" date="1997" name="Plant Mol. Biol.">
        <title>Cloning and expression of an Arabidopsis thaliana cDNA encoding a monofunctional aspartate kinase homologous to the lysine-sensitive enzyme of Escherichia coli.</title>
        <authorList>
            <person name="Tang G."/>
            <person name="Zhu-Shimoni J.X."/>
            <person name="Amir R."/>
            <person name="Zchori I.B.-T."/>
            <person name="Galili G."/>
        </authorList>
    </citation>
    <scope>NUCLEOTIDE SEQUENCE [MRNA]</scope>
    <scope>TISSUE SPECIFICITY</scope>
</reference>
<reference key="2">
    <citation type="submission" date="1998-01" db="EMBL/GenBank/DDBJ databases">
        <authorList>
            <person name="Frankard V.M.S."/>
            <person name="Vauterin M."/>
            <person name="Jacobs M."/>
        </authorList>
    </citation>
    <scope>NUCLEOTIDE SEQUENCE [GENOMIC DNA]</scope>
    <source>
        <strain>cv. Columbia</strain>
        <tissue>Leaf</tissue>
    </source>
</reference>
<reference key="3">
    <citation type="journal article" date="1997" name="DNA Res.">
        <title>Structural analysis of Arabidopsis thaliana chromosome 5. III. Sequence features of the regions of 1,191,918 bp covered by seventeen physically assigned P1 clones.</title>
        <authorList>
            <person name="Nakamura Y."/>
            <person name="Sato S."/>
            <person name="Kaneko T."/>
            <person name="Kotani H."/>
            <person name="Asamizu E."/>
            <person name="Miyajima N."/>
            <person name="Tabata S."/>
        </authorList>
    </citation>
    <scope>NUCLEOTIDE SEQUENCE [LARGE SCALE GENOMIC DNA]</scope>
    <source>
        <strain>cv. Columbia</strain>
    </source>
</reference>
<reference key="4">
    <citation type="journal article" date="2017" name="Plant J.">
        <title>Araport11: a complete reannotation of the Arabidopsis thaliana reference genome.</title>
        <authorList>
            <person name="Cheng C.Y."/>
            <person name="Krishnakumar V."/>
            <person name="Chan A.P."/>
            <person name="Thibaud-Nissen F."/>
            <person name="Schobel S."/>
            <person name="Town C.D."/>
        </authorList>
    </citation>
    <scope>GENOME REANNOTATION</scope>
    <source>
        <strain>cv. Columbia</strain>
    </source>
</reference>
<reference key="5">
    <citation type="journal article" date="2007" name="FEBS J.">
        <title>Allosteric monofunctional aspartate kinases from Arabidopsis.</title>
        <authorList>
            <person name="Curien G."/>
            <person name="Laurencin M."/>
            <person name="Robert-Genthon M."/>
            <person name="Dumas R."/>
        </authorList>
    </citation>
    <scope>BIOPHYSICOCHEMICAL PROPERTIES</scope>
    <scope>ACTIVITY REGULATION</scope>
</reference>
<feature type="transit peptide" description="Chloroplast" evidence="2">
    <location>
        <begin position="1"/>
        <end position="84"/>
    </location>
</feature>
<feature type="chain" id="PRO_0000248158" description="Aspartokinase 2, chloroplastic">
    <location>
        <begin position="85"/>
        <end position="544"/>
    </location>
</feature>
<feature type="domain" description="ACT 1" evidence="3">
    <location>
        <begin position="401"/>
        <end position="479"/>
    </location>
</feature>
<feature type="domain" description="ACT 2" evidence="3">
    <location>
        <begin position="481"/>
        <end position="544"/>
    </location>
</feature>
<feature type="binding site" evidence="1">
    <location>
        <position position="87"/>
    </location>
    <ligand>
        <name>ATP</name>
        <dbReference type="ChEBI" id="CHEBI:30616"/>
    </ligand>
</feature>
<feature type="binding site" evidence="1">
    <location>
        <position position="90"/>
    </location>
    <ligand>
        <name>ATP</name>
        <dbReference type="ChEBI" id="CHEBI:30616"/>
    </ligand>
</feature>
<feature type="binding site" evidence="1">
    <location>
        <position position="119"/>
    </location>
    <ligand>
        <name>ATP</name>
        <dbReference type="ChEBI" id="CHEBI:30616"/>
    </ligand>
</feature>
<feature type="binding site" evidence="1">
    <location>
        <position position="203"/>
    </location>
    <ligand>
        <name>substrate</name>
    </ligand>
</feature>
<feature type="sequence conflict" description="In Ref. 1; AAB63104 and 2; CAC06395." evidence="6" ref="1 2">
    <original>E</original>
    <variation>G</variation>
    <location>
        <position position="94"/>
    </location>
</feature>
<feature type="sequence conflict" description="In Ref. 1; AAB63104 and 2; CAC06395." evidence="6" ref="1 2">
    <original>L</original>
    <variation>F</variation>
    <location>
        <position position="107"/>
    </location>
</feature>
<feature type="sequence conflict" description="In Ref. 1; AAB63104 and 2; CAC06395." evidence="6" ref="1 2">
    <original>T</original>
    <variation>I</variation>
    <location>
        <position position="125"/>
    </location>
</feature>
<feature type="sequence conflict" description="In Ref. 1; AAB63104." evidence="6" ref="1">
    <original>E</original>
    <variation>G</variation>
    <location>
        <position position="144"/>
    </location>
</feature>
<sequence length="544" mass="59605">MASLQLYGVKTPGLALSSKRLEFASKGACFSVTLPSSSAVFRDVEHSCRNIGLRVSCEALRVDLLQRKEPETCDSSGTGKELTCVMKFGGSSVESAERMKEVANLILSFPDERPVIVLSAMGKTTNKLLKAGEKAVTCGVTNVESIEELSFIKELHLRTAHELGVETTVIEKHLEGLHQLLKGISMMKELTLRTRDYLVSFGECMSTRLFSAYLNKIGHKARQYDAFEIGFITTDDFTNADILEATYPAVSKTLVGDWSKENAVPVVTGYLGKGWRSCAITTLGRGGSDLTATTIGKALGLREIQVWKDVDGVLTCDPNIYPGAQSVPYLTFDEAAELAYFGAQVLHPLSMRPARDGDIPVRVKNSYNPTAPGTVITRSRDMSKAVLTSIVLKRNVTMLDIASTRMLGQYGFLAKVFTTFEDLGISVDVVATSEVSISLTLDPAKLWGRELIQRVNELDNLVEELEKIAVVKLLQRRSIISLIGNVQKSSLILEKVFQVFRSNGVNVQMISQGASKVNISLIVNDEEAEQCVRALHSAFFETDP</sequence>
<accession>O23653</accession>
<accession>Q9FMU4</accession>
<accession>Q9FY44</accession>
<gene>
    <name type="primary">AK2</name>
    <name type="synonym">AK-LYS2</name>
    <name type="synonym">CARAB-AK-LYS</name>
    <name type="ordered locus">At5g14060</name>
    <name type="ORF">MUA22.6</name>
</gene>
<evidence type="ECO:0000250" key="1"/>
<evidence type="ECO:0000255" key="2"/>
<evidence type="ECO:0000255" key="3">
    <source>
        <dbReference type="PROSITE-ProRule" id="PRU01007"/>
    </source>
</evidence>
<evidence type="ECO:0000269" key="4">
    <source>
    </source>
</evidence>
<evidence type="ECO:0000269" key="5">
    <source>
    </source>
</evidence>
<evidence type="ECO:0000305" key="6"/>